<reference key="1">
    <citation type="journal article" date="2004" name="Nat. Biotechnol.">
        <title>Complete sequence and comparative genome analysis of the dairy bacterium Streptococcus thermophilus.</title>
        <authorList>
            <person name="Bolotin A."/>
            <person name="Quinquis B."/>
            <person name="Renault P."/>
            <person name="Sorokin A."/>
            <person name="Ehrlich S.D."/>
            <person name="Kulakauskas S."/>
            <person name="Lapidus A."/>
            <person name="Goltsman E."/>
            <person name="Mazur M."/>
            <person name="Pusch G.D."/>
            <person name="Fonstein M."/>
            <person name="Overbeek R."/>
            <person name="Kyprides N."/>
            <person name="Purnelle B."/>
            <person name="Prozzi D."/>
            <person name="Ngui K."/>
            <person name="Masuy D."/>
            <person name="Hancy F."/>
            <person name="Burteau S."/>
            <person name="Boutry M."/>
            <person name="Delcour J."/>
            <person name="Goffeau A."/>
            <person name="Hols P."/>
        </authorList>
    </citation>
    <scope>NUCLEOTIDE SEQUENCE [LARGE SCALE GENOMIC DNA]</scope>
    <source>
        <strain>ATCC BAA-250 / LMG 18311</strain>
    </source>
</reference>
<proteinExistence type="inferred from homology"/>
<organism>
    <name type="scientific">Streptococcus thermophilus (strain ATCC BAA-250 / LMG 18311)</name>
    <dbReference type="NCBI Taxonomy" id="264199"/>
    <lineage>
        <taxon>Bacteria</taxon>
        <taxon>Bacillati</taxon>
        <taxon>Bacillota</taxon>
        <taxon>Bacilli</taxon>
        <taxon>Lactobacillales</taxon>
        <taxon>Streptococcaceae</taxon>
        <taxon>Streptococcus</taxon>
    </lineage>
</organism>
<name>RS16_STRT2</name>
<comment type="similarity">
    <text evidence="1">Belongs to the bacterial ribosomal protein bS16 family.</text>
</comment>
<keyword id="KW-1185">Reference proteome</keyword>
<keyword id="KW-0687">Ribonucleoprotein</keyword>
<keyword id="KW-0689">Ribosomal protein</keyword>
<evidence type="ECO:0000255" key="1">
    <source>
        <dbReference type="HAMAP-Rule" id="MF_00385"/>
    </source>
</evidence>
<evidence type="ECO:0000305" key="2"/>
<protein>
    <recommendedName>
        <fullName evidence="1">Small ribosomal subunit protein bS16</fullName>
    </recommendedName>
    <alternativeName>
        <fullName evidence="2">30S ribosomal protein S16</fullName>
    </alternativeName>
</protein>
<dbReference type="EMBL" id="CP000023">
    <property type="protein sequence ID" value="AAV61151.1"/>
    <property type="molecule type" value="Genomic_DNA"/>
</dbReference>
<dbReference type="RefSeq" id="WP_002884675.1">
    <property type="nucleotide sequence ID" value="NC_006448.1"/>
</dbReference>
<dbReference type="SMR" id="Q5M387"/>
<dbReference type="STRING" id="264199.stu1548"/>
<dbReference type="GeneID" id="93792722"/>
<dbReference type="KEGG" id="stl:stu1548"/>
<dbReference type="eggNOG" id="COG0228">
    <property type="taxonomic scope" value="Bacteria"/>
</dbReference>
<dbReference type="HOGENOM" id="CLU_100590_5_0_9"/>
<dbReference type="Proteomes" id="UP000001170">
    <property type="component" value="Chromosome"/>
</dbReference>
<dbReference type="GO" id="GO:0005737">
    <property type="term" value="C:cytoplasm"/>
    <property type="evidence" value="ECO:0007669"/>
    <property type="project" value="UniProtKB-ARBA"/>
</dbReference>
<dbReference type="GO" id="GO:0015935">
    <property type="term" value="C:small ribosomal subunit"/>
    <property type="evidence" value="ECO:0007669"/>
    <property type="project" value="TreeGrafter"/>
</dbReference>
<dbReference type="GO" id="GO:0003735">
    <property type="term" value="F:structural constituent of ribosome"/>
    <property type="evidence" value="ECO:0007669"/>
    <property type="project" value="InterPro"/>
</dbReference>
<dbReference type="GO" id="GO:0006412">
    <property type="term" value="P:translation"/>
    <property type="evidence" value="ECO:0007669"/>
    <property type="project" value="UniProtKB-UniRule"/>
</dbReference>
<dbReference type="FunFam" id="3.30.1320.10:FF:000002">
    <property type="entry name" value="30S ribosomal protein S16"/>
    <property type="match status" value="1"/>
</dbReference>
<dbReference type="Gene3D" id="3.30.1320.10">
    <property type="match status" value="1"/>
</dbReference>
<dbReference type="HAMAP" id="MF_00385">
    <property type="entry name" value="Ribosomal_bS16"/>
    <property type="match status" value="1"/>
</dbReference>
<dbReference type="InterPro" id="IPR000307">
    <property type="entry name" value="Ribosomal_bS16"/>
</dbReference>
<dbReference type="InterPro" id="IPR023803">
    <property type="entry name" value="Ribosomal_bS16_dom_sf"/>
</dbReference>
<dbReference type="NCBIfam" id="TIGR00002">
    <property type="entry name" value="S16"/>
    <property type="match status" value="1"/>
</dbReference>
<dbReference type="PANTHER" id="PTHR12919">
    <property type="entry name" value="30S RIBOSOMAL PROTEIN S16"/>
    <property type="match status" value="1"/>
</dbReference>
<dbReference type="PANTHER" id="PTHR12919:SF20">
    <property type="entry name" value="SMALL RIBOSOMAL SUBUNIT PROTEIN BS16M"/>
    <property type="match status" value="1"/>
</dbReference>
<dbReference type="Pfam" id="PF00886">
    <property type="entry name" value="Ribosomal_S16"/>
    <property type="match status" value="1"/>
</dbReference>
<dbReference type="SUPFAM" id="SSF54565">
    <property type="entry name" value="Ribosomal protein S16"/>
    <property type="match status" value="1"/>
</dbReference>
<gene>
    <name evidence="1" type="primary">rpsP</name>
    <name type="ordered locus">stu1548</name>
</gene>
<sequence>MAVKIRLTRMGSKKKPFYRINVADSRAPRDGRFIETVGTYNPLVEENQVTLKEERVLEWLSKGAQPSDTVRNILSKEGVMKKFHESKFSK</sequence>
<feature type="chain" id="PRO_0000243878" description="Small ribosomal subunit protein bS16">
    <location>
        <begin position="1"/>
        <end position="90"/>
    </location>
</feature>
<accession>Q5M387</accession>